<reference key="1">
    <citation type="journal article" date="2001" name="Sex. Plant Reprod.">
        <title>Isolation and characterization of OsDMC1, the rice homologue of the yeast DMC1 gene essential for meiosis.</title>
        <authorList>
            <person name="Ding Z.-J."/>
            <person name="Wang T."/>
            <person name="Chong K."/>
            <person name="Bai S.-N."/>
        </authorList>
        <dbReference type="AGRICOLA" id="IND23233616"/>
    </citation>
    <scope>NUCLEOTIDE SEQUENCE [MRNA]</scope>
    <scope>TISSUE SPECIFICITY</scope>
    <source>
        <strain>cv. Nipponbare</strain>
        <tissue>Spike</tissue>
    </source>
</reference>
<reference key="2">
    <citation type="journal article" date="2001" name="Theor. Appl. Genet.">
        <title>Characterization of a DMC1 homologue, RiLIM15, in meiotic panicles, mitotic cultured cells and mature leaves of rice (Oryza sativa L.).</title>
        <authorList>
            <person name="Shimazu J."/>
            <person name="Matsukura C."/>
            <person name="Senda M."/>
            <person name="Ishikawa R."/>
            <person name="Akada S."/>
            <person name="Harada T."/>
            <person name="Tabata S."/>
            <person name="Niizeki M."/>
        </authorList>
        <dbReference type="AGRICOLA" id="IND23222213"/>
    </citation>
    <scope>NUCLEOTIDE SEQUENCE [GENOMIC DNA / MRNA]</scope>
    <scope>TISSUE SPECIFICITY</scope>
    <source>
        <tissue>Panicle</tissue>
    </source>
</reference>
<reference key="3">
    <citation type="journal article" date="2005" name="Plant Mol. Biol.">
        <title>DNA binding and pairing activity of OsDmc1, a recombinase from rice.</title>
        <authorList>
            <person name="Kant C.R."/>
            <person name="Rao B.J."/>
            <person name="Sainis J.K."/>
        </authorList>
    </citation>
    <scope>NUCLEOTIDE SEQUENCE [GENOMIC DNA]</scope>
</reference>
<reference key="4">
    <citation type="journal article" date="2008" name="Nucleic Acids Res.">
        <title>Filament formation and robust strand exchange activities of the rice DMC1A and DMC1B proteins.</title>
        <authorList>
            <person name="Sakane I."/>
            <person name="Kamataki C."/>
            <person name="Takizawa Y."/>
            <person name="Nakashima M."/>
            <person name="Toki S."/>
            <person name="Ichikawa H."/>
            <person name="Ikawa S."/>
            <person name="Shibata T."/>
            <person name="Kurumizaka H."/>
        </authorList>
    </citation>
    <scope>NUCLEOTIDE SEQUENCE [MRNA]</scope>
    <source>
        <strain>cv. Nipponbare</strain>
    </source>
</reference>
<reference key="5">
    <citation type="journal article" date="2005" name="BMC Biol.">
        <title>The sequence of rice chromosomes 11 and 12, rich in disease resistance genes and recent gene duplications.</title>
        <authorList>
            <consortium name="The rice chromosomes 11 and 12 sequencing consortia"/>
        </authorList>
    </citation>
    <scope>NUCLEOTIDE SEQUENCE [LARGE SCALE GENOMIC DNA]</scope>
    <source>
        <strain>cv. Nipponbare</strain>
    </source>
</reference>
<reference key="6">
    <citation type="journal article" date="2005" name="Nature">
        <title>The map-based sequence of the rice genome.</title>
        <authorList>
            <consortium name="International rice genome sequencing project (IRGSP)"/>
        </authorList>
    </citation>
    <scope>NUCLEOTIDE SEQUENCE [LARGE SCALE GENOMIC DNA]</scope>
    <source>
        <strain>cv. Nipponbare</strain>
    </source>
</reference>
<reference key="7">
    <citation type="journal article" date="2008" name="Nucleic Acids Res.">
        <title>The rice annotation project database (RAP-DB): 2008 update.</title>
        <authorList>
            <consortium name="The rice annotation project (RAP)"/>
        </authorList>
    </citation>
    <scope>GENOME REANNOTATION</scope>
    <source>
        <strain>cv. Nipponbare</strain>
    </source>
</reference>
<reference key="8">
    <citation type="journal article" date="2013" name="Rice">
        <title>Improvement of the Oryza sativa Nipponbare reference genome using next generation sequence and optical map data.</title>
        <authorList>
            <person name="Kawahara Y."/>
            <person name="de la Bastide M."/>
            <person name="Hamilton J.P."/>
            <person name="Kanamori H."/>
            <person name="McCombie W.R."/>
            <person name="Ouyang S."/>
            <person name="Schwartz D.C."/>
            <person name="Tanaka T."/>
            <person name="Wu J."/>
            <person name="Zhou S."/>
            <person name="Childs K.L."/>
            <person name="Davidson R.M."/>
            <person name="Lin H."/>
            <person name="Quesada-Ocampo L."/>
            <person name="Vaillancourt B."/>
            <person name="Sakai H."/>
            <person name="Lee S.S."/>
            <person name="Kim J."/>
            <person name="Numa H."/>
            <person name="Itoh T."/>
            <person name="Buell C.R."/>
            <person name="Matsumoto T."/>
        </authorList>
    </citation>
    <scope>GENOME REANNOTATION</scope>
    <source>
        <strain>cv. Nipponbare</strain>
    </source>
</reference>
<reference key="9">
    <citation type="journal article" date="2016" name="Plant Physiol.">
        <title>OsDMC1 is not required for homologous pairing in rice meiosis.</title>
        <authorList>
            <person name="Wang H."/>
            <person name="Hu Q."/>
            <person name="Tang D."/>
            <person name="Liu X."/>
            <person name="Du G."/>
            <person name="Shen Y."/>
            <person name="Li Y."/>
            <person name="Cheng Z."/>
        </authorList>
    </citation>
    <scope>FUNCTION</scope>
    <scope>SUBCELLULAR LOCATION</scope>
</reference>
<sequence>MAPSKQYDEGGQLQLMDAERIEEEEECFESIDKLISQGINSGDVKKLQDAGIYTCNGLMMHTKKSLTGIKGLSEAKVDKICEAAEKLLSQGFMTGSDLLIKRKSVVRITTGSQALDELLGGGIETLCITEAFGEFRSGKTQLAHTLCVSTQLPIHMHGGNGKVAYIDTEGTFRPERIVPIAERFGMDANAVLDNIIYARAYTYEHQYNLLLGLAAKMAEEPFRLLIVDSVIALFRVDFSGRGELAERQQKLAQMLSRLTKIAEEFNVAVYITNQVIADPGGGMFITDPKKPAGGHVLAHAATIRLMLRKGKGEQRVCKIFDAPNLPEGEAVFQVTSGGIMDAKD</sequence>
<accession>Q7GBF7</accession>
<accession>Q8VWY5</accession>
<accession>Q93XI1</accession>
<accession>Q94IA9</accession>
<accession>Q94JQ1</accession>
<feature type="chain" id="PRO_0000445042" description="Meiotic recombination protein DMC1 homolog B">
    <location>
        <begin position="1"/>
        <end position="344"/>
    </location>
</feature>
<feature type="binding site" evidence="3">
    <location>
        <begin position="133"/>
        <end position="140"/>
    </location>
    <ligand>
        <name>ATP</name>
        <dbReference type="ChEBI" id="CHEBI:30616"/>
    </ligand>
</feature>
<feature type="binding site" evidence="1">
    <location>
        <position position="235"/>
    </location>
    <ligand>
        <name>dsDNA</name>
        <dbReference type="ChEBI" id="CHEBI:4705"/>
    </ligand>
</feature>
<feature type="binding site" evidence="1">
    <location>
        <position position="235"/>
    </location>
    <ligand>
        <name>ssDNA</name>
        <dbReference type="ChEBI" id="CHEBI:9160"/>
    </ligand>
</feature>
<feature type="binding site" evidence="1">
    <location>
        <position position="238"/>
    </location>
    <ligand>
        <name>ssDNA</name>
        <dbReference type="ChEBI" id="CHEBI:9160"/>
    </ligand>
</feature>
<feature type="binding site" evidence="1">
    <location>
        <position position="241"/>
    </location>
    <ligand>
        <name>dsDNA</name>
        <dbReference type="ChEBI" id="CHEBI:4705"/>
    </ligand>
</feature>
<feature type="binding site" evidence="1">
    <location>
        <position position="241"/>
    </location>
    <ligand>
        <name>ssDNA</name>
        <dbReference type="ChEBI" id="CHEBI:9160"/>
    </ligand>
</feature>
<feature type="binding site" evidence="1">
    <location>
        <position position="247"/>
    </location>
    <ligand>
        <name>dsDNA</name>
        <dbReference type="ChEBI" id="CHEBI:4705"/>
    </ligand>
</feature>
<feature type="binding site" evidence="1">
    <location>
        <position position="247"/>
    </location>
    <ligand>
        <name>ssDNA</name>
        <dbReference type="ChEBI" id="CHEBI:9160"/>
    </ligand>
</feature>
<feature type="binding site" evidence="1">
    <location>
        <position position="315"/>
    </location>
    <ligand>
        <name>ssDNA</name>
        <dbReference type="ChEBI" id="CHEBI:9160"/>
    </ligand>
</feature>
<feature type="sequence conflict" description="In Ref. 2; BAB62025." evidence="11" ref="2">
    <original>E</original>
    <variation>K</variation>
    <location>
        <position position="246"/>
    </location>
</feature>
<gene>
    <name evidence="8" type="primary">DMC1B</name>
    <name evidence="9" type="synonym">DMC1</name>
    <name evidence="12" type="ordered locus">Os11g0146800</name>
    <name evidence="11" type="ordered locus">LOC_Os11g04954</name>
</gene>
<dbReference type="EMBL" id="AB046620">
    <property type="protein sequence ID" value="BAB84121.1"/>
    <property type="molecule type" value="mRNA"/>
</dbReference>
<dbReference type="EMBL" id="AB064544">
    <property type="protein sequence ID" value="BAB61838.1"/>
    <property type="molecule type" value="mRNA"/>
</dbReference>
<dbReference type="EMBL" id="AB065112">
    <property type="protein sequence ID" value="BAB62025.1"/>
    <property type="molecule type" value="Genomic_DNA"/>
</dbReference>
<dbReference type="EMBL" id="AF375982">
    <property type="protein sequence ID" value="AAK55555.2"/>
    <property type="molecule type" value="Genomic_DNA"/>
</dbReference>
<dbReference type="EMBL" id="AB079874">
    <property type="protein sequence ID" value="BAB85214.1"/>
    <property type="molecule type" value="mRNA"/>
</dbReference>
<dbReference type="EMBL" id="DP000010">
    <property type="status" value="NOT_ANNOTATED_CDS"/>
    <property type="molecule type" value="Genomic_DNA"/>
</dbReference>
<dbReference type="EMBL" id="AP008217">
    <property type="protein sequence ID" value="BAF27583.1"/>
    <property type="molecule type" value="Genomic_DNA"/>
</dbReference>
<dbReference type="EMBL" id="AP014967">
    <property type="protein sequence ID" value="BAT12668.1"/>
    <property type="molecule type" value="Genomic_DNA"/>
</dbReference>
<dbReference type="RefSeq" id="XP_015616932.1">
    <property type="nucleotide sequence ID" value="XM_015761446.1"/>
</dbReference>
<dbReference type="SMR" id="Q7GBF7"/>
<dbReference type="FunCoup" id="Q7GBF7">
    <property type="interactions" value="74"/>
</dbReference>
<dbReference type="STRING" id="39947.Q7GBF7"/>
<dbReference type="PaxDb" id="39947-Q7GBF7"/>
<dbReference type="EnsemblPlants" id="Os11t0146800-01">
    <property type="protein sequence ID" value="Os11t0146800-01"/>
    <property type="gene ID" value="Os11g0146800"/>
</dbReference>
<dbReference type="Gramene" id="Os11t0146800-01">
    <property type="protein sequence ID" value="Os11t0146800-01"/>
    <property type="gene ID" value="Os11g0146800"/>
</dbReference>
<dbReference type="KEGG" id="dosa:Os11g0146800"/>
<dbReference type="eggNOG" id="KOG1434">
    <property type="taxonomic scope" value="Eukaryota"/>
</dbReference>
<dbReference type="HOGENOM" id="CLU_041732_0_1_1"/>
<dbReference type="InParanoid" id="Q7GBF7"/>
<dbReference type="OMA" id="ANPMKPV"/>
<dbReference type="OrthoDB" id="10251254at2759"/>
<dbReference type="Proteomes" id="UP000000763">
    <property type="component" value="Chromosome 11"/>
</dbReference>
<dbReference type="Proteomes" id="UP000059680">
    <property type="component" value="Chromosome 11"/>
</dbReference>
<dbReference type="GO" id="GO:0000794">
    <property type="term" value="C:condensed nuclear chromosome"/>
    <property type="evidence" value="ECO:0000318"/>
    <property type="project" value="GO_Central"/>
</dbReference>
<dbReference type="GO" id="GO:0005634">
    <property type="term" value="C:nucleus"/>
    <property type="evidence" value="ECO:0000314"/>
    <property type="project" value="UniProtKB"/>
</dbReference>
<dbReference type="GO" id="GO:0005524">
    <property type="term" value="F:ATP binding"/>
    <property type="evidence" value="ECO:0007669"/>
    <property type="project" value="UniProtKB-KW"/>
</dbReference>
<dbReference type="GO" id="GO:0008094">
    <property type="term" value="F:ATP-dependent activity, acting on DNA"/>
    <property type="evidence" value="ECO:0000318"/>
    <property type="project" value="GO_Central"/>
</dbReference>
<dbReference type="GO" id="GO:0140664">
    <property type="term" value="F:ATP-dependent DNA damage sensor activity"/>
    <property type="evidence" value="ECO:0007669"/>
    <property type="project" value="InterPro"/>
</dbReference>
<dbReference type="GO" id="GO:0000150">
    <property type="term" value="F:DNA strand exchange activity"/>
    <property type="evidence" value="ECO:0000318"/>
    <property type="project" value="GO_Central"/>
</dbReference>
<dbReference type="GO" id="GO:0003690">
    <property type="term" value="F:double-stranded DNA binding"/>
    <property type="evidence" value="ECO:0000318"/>
    <property type="project" value="GO_Central"/>
</dbReference>
<dbReference type="GO" id="GO:0003697">
    <property type="term" value="F:single-stranded DNA binding"/>
    <property type="evidence" value="ECO:0000318"/>
    <property type="project" value="GO_Central"/>
</dbReference>
<dbReference type="GO" id="GO:0070192">
    <property type="term" value="P:chromosome organization involved in meiotic cell cycle"/>
    <property type="evidence" value="ECO:0000318"/>
    <property type="project" value="GO_Central"/>
</dbReference>
<dbReference type="GO" id="GO:0000730">
    <property type="term" value="P:DNA recombinase assembly"/>
    <property type="evidence" value="ECO:0000318"/>
    <property type="project" value="GO_Central"/>
</dbReference>
<dbReference type="GO" id="GO:0042148">
    <property type="term" value="P:DNA strand invasion"/>
    <property type="evidence" value="ECO:0000318"/>
    <property type="project" value="GO_Central"/>
</dbReference>
<dbReference type="GO" id="GO:0006312">
    <property type="term" value="P:mitotic recombination"/>
    <property type="evidence" value="ECO:0000318"/>
    <property type="project" value="GO_Central"/>
</dbReference>
<dbReference type="GO" id="GO:0007131">
    <property type="term" value="P:reciprocal meiotic recombination"/>
    <property type="evidence" value="ECO:0000315"/>
    <property type="project" value="UniProtKB"/>
</dbReference>
<dbReference type="GO" id="GO:0007130">
    <property type="term" value="P:synaptonemal complex assembly"/>
    <property type="evidence" value="ECO:0000315"/>
    <property type="project" value="UniProtKB"/>
</dbReference>
<dbReference type="CDD" id="cd19514">
    <property type="entry name" value="DMC1"/>
    <property type="match status" value="1"/>
</dbReference>
<dbReference type="FunFam" id="3.40.50.300:FF:000239">
    <property type="entry name" value="Meiotic recombination protein DMC1"/>
    <property type="match status" value="1"/>
</dbReference>
<dbReference type="FunFam" id="1.10.150.20:FF:000043">
    <property type="entry name" value="Meiotic recombination protein DMC1 homolog"/>
    <property type="match status" value="1"/>
</dbReference>
<dbReference type="Gene3D" id="1.10.150.20">
    <property type="entry name" value="5' to 3' exonuclease, C-terminal subdomain"/>
    <property type="match status" value="1"/>
</dbReference>
<dbReference type="Gene3D" id="3.40.50.300">
    <property type="entry name" value="P-loop containing nucleotide triphosphate hydrolases"/>
    <property type="match status" value="1"/>
</dbReference>
<dbReference type="InterPro" id="IPR011940">
    <property type="entry name" value="Dmc1"/>
</dbReference>
<dbReference type="InterPro" id="IPR013632">
    <property type="entry name" value="DNA_recomb/repair_Rad51_C"/>
</dbReference>
<dbReference type="InterPro" id="IPR016467">
    <property type="entry name" value="DNA_recomb/repair_RecA-like"/>
</dbReference>
<dbReference type="InterPro" id="IPR010995">
    <property type="entry name" value="DNA_repair_Rad51/TF_NusA_a-hlx"/>
</dbReference>
<dbReference type="InterPro" id="IPR027417">
    <property type="entry name" value="P-loop_NTPase"/>
</dbReference>
<dbReference type="InterPro" id="IPR020588">
    <property type="entry name" value="RecA_ATP-bd"/>
</dbReference>
<dbReference type="InterPro" id="IPR020587">
    <property type="entry name" value="RecA_monomer-monomer_interface"/>
</dbReference>
<dbReference type="NCBIfam" id="NF003301">
    <property type="entry name" value="PRK04301.1"/>
    <property type="match status" value="1"/>
</dbReference>
<dbReference type="NCBIfam" id="TIGR02238">
    <property type="entry name" value="recomb_DMC1"/>
    <property type="match status" value="1"/>
</dbReference>
<dbReference type="PANTHER" id="PTHR22942:SF30">
    <property type="entry name" value="MEIOTIC RECOMBINATION PROTEIN DMC1_LIM15 HOMOLOG"/>
    <property type="match status" value="1"/>
</dbReference>
<dbReference type="PANTHER" id="PTHR22942">
    <property type="entry name" value="RECA/RAD51/RADA DNA STRAND-PAIRING FAMILY MEMBER"/>
    <property type="match status" value="1"/>
</dbReference>
<dbReference type="Pfam" id="PF08423">
    <property type="entry name" value="Rad51"/>
    <property type="match status" value="1"/>
</dbReference>
<dbReference type="PIRSF" id="PIRSF005856">
    <property type="entry name" value="Rad51"/>
    <property type="match status" value="1"/>
</dbReference>
<dbReference type="SUPFAM" id="SSF52540">
    <property type="entry name" value="P-loop containing nucleoside triphosphate hydrolases"/>
    <property type="match status" value="1"/>
</dbReference>
<dbReference type="SUPFAM" id="SSF47794">
    <property type="entry name" value="Rad51 N-terminal domain-like"/>
    <property type="match status" value="1"/>
</dbReference>
<dbReference type="PROSITE" id="PS50162">
    <property type="entry name" value="RECA_2"/>
    <property type="match status" value="1"/>
</dbReference>
<dbReference type="PROSITE" id="PS50163">
    <property type="entry name" value="RECA_3"/>
    <property type="match status" value="1"/>
</dbReference>
<proteinExistence type="evidence at transcript level"/>
<keyword id="KW-0067">ATP-binding</keyword>
<keyword id="KW-0131">Cell cycle</keyword>
<keyword id="KW-0238">DNA-binding</keyword>
<keyword id="KW-0469">Meiosis</keyword>
<keyword id="KW-0547">Nucleotide-binding</keyword>
<keyword id="KW-0539">Nucleus</keyword>
<keyword id="KW-1185">Reference proteome</keyword>
<protein>
    <recommendedName>
        <fullName evidence="11">Meiotic recombination protein DMC1 homolog B</fullName>
        <shortName evidence="8">OsDMC1B</shortName>
    </recommendedName>
    <alternativeName>
        <fullName evidence="10">RiLIM15B</fullName>
    </alternativeName>
</protein>
<organism>
    <name type="scientific">Oryza sativa subsp. japonica</name>
    <name type="common">Rice</name>
    <dbReference type="NCBI Taxonomy" id="39947"/>
    <lineage>
        <taxon>Eukaryota</taxon>
        <taxon>Viridiplantae</taxon>
        <taxon>Streptophyta</taxon>
        <taxon>Embryophyta</taxon>
        <taxon>Tracheophyta</taxon>
        <taxon>Spermatophyta</taxon>
        <taxon>Magnoliopsida</taxon>
        <taxon>Liliopsida</taxon>
        <taxon>Poales</taxon>
        <taxon>Poaceae</taxon>
        <taxon>BOP clade</taxon>
        <taxon>Oryzoideae</taxon>
        <taxon>Oryzeae</taxon>
        <taxon>Oryzinae</taxon>
        <taxon>Oryza</taxon>
        <taxon>Oryza sativa</taxon>
    </lineage>
</organism>
<evidence type="ECO:0000250" key="1">
    <source>
        <dbReference type="UniProtKB" id="Q14565"/>
    </source>
</evidence>
<evidence type="ECO:0000250" key="2">
    <source>
        <dbReference type="UniProtKB" id="Q7GBF8"/>
    </source>
</evidence>
<evidence type="ECO:0000255" key="3"/>
<evidence type="ECO:0000269" key="4">
    <source>
    </source>
</evidence>
<evidence type="ECO:0000269" key="5">
    <source>
    </source>
</evidence>
<evidence type="ECO:0000269" key="6">
    <source ref="1"/>
</evidence>
<evidence type="ECO:0000269" key="7">
    <source ref="2"/>
</evidence>
<evidence type="ECO:0000303" key="8">
    <source>
    </source>
</evidence>
<evidence type="ECO:0000303" key="9">
    <source ref="1"/>
</evidence>
<evidence type="ECO:0000303" key="10">
    <source ref="2"/>
</evidence>
<evidence type="ECO:0000305" key="11"/>
<evidence type="ECO:0000312" key="12">
    <source>
        <dbReference type="EMBL" id="BAF27583.1"/>
    </source>
</evidence>
<name>DMC1B_ORYSJ</name>
<comment type="function">
    <text evidence="2 4 5">Recombinase that may participate in meiotic recombination, specifically in homologous strand assimilation, which is required for the resolution of meiotic double-strand breaks (By similarity). Exhibits DNA-dependent ATPase activity when bound to single-stranded DNA (ssDNA). Mediates renaturation of homologous complementary strands as well as assimilation of single strands into homologous supercoiled duplexes leading to D-loop formation (By similarity). Binds circular single-stranded DNA (ssDNA) and circular double-stranded DNA (dsDNA) in vitro (By similarity). Catalyzes DNA homologous renaturation and DNA strand exchange. The rates of these activities are dependent on the state of ATP hydrolysis (By similarity). Forms helical filaments along ssDNA and dsDNA, and promotes strand exchange between ssDNA and dsDNA with long DNA substrates of several thousand base pairs. The presence of the replication protein A is not required for this activity (PubMed:18583359). Seems to be required for homologous pairing and subsequent chromosome segregation during male meiosis (By similarity). May be not directly required for homologous pairing during male meiosis. Required for synaptonemal complex assembly and crossover formation. Functions redundantly with DMC1A (PubMed:26960731).</text>
</comment>
<comment type="subcellular location">
    <subcellularLocation>
        <location evidence="5">Nucleus</location>
    </subcellularLocation>
</comment>
<comment type="tissue specificity">
    <text evidence="6 7">Highly expressed in spikelets (Ref.1). Expressed in meiotic young panicles (Ref.2).</text>
</comment>
<comment type="similarity">
    <text evidence="11">Belongs to the RecA family. DMC1 subfamily.</text>
</comment>